<name>XPO2_DANRE</name>
<accession>Q7SZC2</accession>
<accession>G1K2H9</accession>
<reference evidence="6" key="1">
    <citation type="journal article" date="2013" name="Nature">
        <title>The zebrafish reference genome sequence and its relationship to the human genome.</title>
        <authorList>
            <person name="Howe K."/>
            <person name="Clark M.D."/>
            <person name="Torroja C.F."/>
            <person name="Torrance J."/>
            <person name="Berthelot C."/>
            <person name="Muffato M."/>
            <person name="Collins J.E."/>
            <person name="Humphray S."/>
            <person name="McLaren K."/>
            <person name="Matthews L."/>
            <person name="McLaren S."/>
            <person name="Sealy I."/>
            <person name="Caccamo M."/>
            <person name="Churcher C."/>
            <person name="Scott C."/>
            <person name="Barrett J.C."/>
            <person name="Koch R."/>
            <person name="Rauch G.J."/>
            <person name="White S."/>
            <person name="Chow W."/>
            <person name="Kilian B."/>
            <person name="Quintais L.T."/>
            <person name="Guerra-Assuncao J.A."/>
            <person name="Zhou Y."/>
            <person name="Gu Y."/>
            <person name="Yen J."/>
            <person name="Vogel J.H."/>
            <person name="Eyre T."/>
            <person name="Redmond S."/>
            <person name="Banerjee R."/>
            <person name="Chi J."/>
            <person name="Fu B."/>
            <person name="Langley E."/>
            <person name="Maguire S.F."/>
            <person name="Laird G.K."/>
            <person name="Lloyd D."/>
            <person name="Kenyon E."/>
            <person name="Donaldson S."/>
            <person name="Sehra H."/>
            <person name="Almeida-King J."/>
            <person name="Loveland J."/>
            <person name="Trevanion S."/>
            <person name="Jones M."/>
            <person name="Quail M."/>
            <person name="Willey D."/>
            <person name="Hunt A."/>
            <person name="Burton J."/>
            <person name="Sims S."/>
            <person name="McLay K."/>
            <person name="Plumb B."/>
            <person name="Davis J."/>
            <person name="Clee C."/>
            <person name="Oliver K."/>
            <person name="Clark R."/>
            <person name="Riddle C."/>
            <person name="Elliot D."/>
            <person name="Threadgold G."/>
            <person name="Harden G."/>
            <person name="Ware D."/>
            <person name="Begum S."/>
            <person name="Mortimore B."/>
            <person name="Kerry G."/>
            <person name="Heath P."/>
            <person name="Phillimore B."/>
            <person name="Tracey A."/>
            <person name="Corby N."/>
            <person name="Dunn M."/>
            <person name="Johnson C."/>
            <person name="Wood J."/>
            <person name="Clark S."/>
            <person name="Pelan S."/>
            <person name="Griffiths G."/>
            <person name="Smith M."/>
            <person name="Glithero R."/>
            <person name="Howden P."/>
            <person name="Barker N."/>
            <person name="Lloyd C."/>
            <person name="Stevens C."/>
            <person name="Harley J."/>
            <person name="Holt K."/>
            <person name="Panagiotidis G."/>
            <person name="Lovell J."/>
            <person name="Beasley H."/>
            <person name="Henderson C."/>
            <person name="Gordon D."/>
            <person name="Auger K."/>
            <person name="Wright D."/>
            <person name="Collins J."/>
            <person name="Raisen C."/>
            <person name="Dyer L."/>
            <person name="Leung K."/>
            <person name="Robertson L."/>
            <person name="Ambridge K."/>
            <person name="Leongamornlert D."/>
            <person name="McGuire S."/>
            <person name="Gilderthorp R."/>
            <person name="Griffiths C."/>
            <person name="Manthravadi D."/>
            <person name="Nichol S."/>
            <person name="Barker G."/>
            <person name="Whitehead S."/>
            <person name="Kay M."/>
            <person name="Brown J."/>
            <person name="Murnane C."/>
            <person name="Gray E."/>
            <person name="Humphries M."/>
            <person name="Sycamore N."/>
            <person name="Barker D."/>
            <person name="Saunders D."/>
            <person name="Wallis J."/>
            <person name="Babbage A."/>
            <person name="Hammond S."/>
            <person name="Mashreghi-Mohammadi M."/>
            <person name="Barr L."/>
            <person name="Martin S."/>
            <person name="Wray P."/>
            <person name="Ellington A."/>
            <person name="Matthews N."/>
            <person name="Ellwood M."/>
            <person name="Woodmansey R."/>
            <person name="Clark G."/>
            <person name="Cooper J."/>
            <person name="Tromans A."/>
            <person name="Grafham D."/>
            <person name="Skuce C."/>
            <person name="Pandian R."/>
            <person name="Andrews R."/>
            <person name="Harrison E."/>
            <person name="Kimberley A."/>
            <person name="Garnett J."/>
            <person name="Fosker N."/>
            <person name="Hall R."/>
            <person name="Garner P."/>
            <person name="Kelly D."/>
            <person name="Bird C."/>
            <person name="Palmer S."/>
            <person name="Gehring I."/>
            <person name="Berger A."/>
            <person name="Dooley C.M."/>
            <person name="Ersan-Urun Z."/>
            <person name="Eser C."/>
            <person name="Geiger H."/>
            <person name="Geisler M."/>
            <person name="Karotki L."/>
            <person name="Kirn A."/>
            <person name="Konantz J."/>
            <person name="Konantz M."/>
            <person name="Oberlander M."/>
            <person name="Rudolph-Geiger S."/>
            <person name="Teucke M."/>
            <person name="Lanz C."/>
            <person name="Raddatz G."/>
            <person name="Osoegawa K."/>
            <person name="Zhu B."/>
            <person name="Rapp A."/>
            <person name="Widaa S."/>
            <person name="Langford C."/>
            <person name="Yang F."/>
            <person name="Schuster S.C."/>
            <person name="Carter N.P."/>
            <person name="Harrow J."/>
            <person name="Ning Z."/>
            <person name="Herrero J."/>
            <person name="Searle S.M."/>
            <person name="Enright A."/>
            <person name="Geisler R."/>
            <person name="Plasterk R.H."/>
            <person name="Lee C."/>
            <person name="Westerfield M."/>
            <person name="de Jong P.J."/>
            <person name="Zon L.I."/>
            <person name="Postlethwait J.H."/>
            <person name="Nusslein-Volhard C."/>
            <person name="Hubbard T.J."/>
            <person name="Roest Crollius H."/>
            <person name="Rogers J."/>
            <person name="Stemple D.L."/>
        </authorList>
    </citation>
    <scope>NUCLEOTIDE SEQUENCE [LARGE SCALE GENOMIC DNA]</scope>
    <source>
        <strain evidence="6">Tuebingen</strain>
    </source>
</reference>
<reference key="2">
    <citation type="submission" date="2003-05" db="EMBL/GenBank/DDBJ databases">
        <authorList>
            <consortium name="NIH - Zebrafish Gene Collection (ZGC) project"/>
        </authorList>
    </citation>
    <scope>NUCLEOTIDE SEQUENCE [LARGE SCALE MRNA]</scope>
    <source>
        <strain>AB</strain>
        <tissue>Kidney</tissue>
    </source>
</reference>
<reference key="3">
    <citation type="journal article" date="2010" name="Curr. Biol.">
        <title>Cse1l is a negative regulator of CFTR-dependent fluid secretion.</title>
        <authorList>
            <person name="Bagnat M."/>
            <person name="Navis A."/>
            <person name="Herbstreith S."/>
            <person name="Brand-Arzamendi K."/>
            <person name="Curado S."/>
            <person name="Gabriel S."/>
            <person name="Mostov K."/>
            <person name="Huisken J."/>
            <person name="Stainier D.Y."/>
        </authorList>
    </citation>
    <scope>FUNCTION</scope>
    <scope>INTERACTION WITH CFTR</scope>
    <scope>SUBCELLULAR LOCATION</scope>
    <scope>DISRUPTION PHENOTYPE</scope>
</reference>
<proteinExistence type="evidence at protein level"/>
<protein>
    <recommendedName>
        <fullName>Exportin-2</fullName>
        <shortName>Exp2</shortName>
    </recommendedName>
    <alternativeName>
        <fullName>Chromosome segregation 1-like protein</fullName>
    </alternativeName>
    <alternativeName>
        <fullName>Importin-alpha re-exporter</fullName>
    </alternativeName>
</protein>
<organism>
    <name type="scientific">Danio rerio</name>
    <name type="common">Zebrafish</name>
    <name type="synonym">Brachydanio rerio</name>
    <dbReference type="NCBI Taxonomy" id="7955"/>
    <lineage>
        <taxon>Eukaryota</taxon>
        <taxon>Metazoa</taxon>
        <taxon>Chordata</taxon>
        <taxon>Craniata</taxon>
        <taxon>Vertebrata</taxon>
        <taxon>Euteleostomi</taxon>
        <taxon>Actinopterygii</taxon>
        <taxon>Neopterygii</taxon>
        <taxon>Teleostei</taxon>
        <taxon>Ostariophysi</taxon>
        <taxon>Cypriniformes</taxon>
        <taxon>Danionidae</taxon>
        <taxon>Danioninae</taxon>
        <taxon>Danio</taxon>
    </lineage>
</organism>
<comment type="function">
    <text evidence="1 3">Export receptor for importin alpha. Mediates importin-alpha re-export from the nucleus to the cytoplasm after import substrates have been released into the nucleoplasm (By similarity). Negatively regulates fluid secretion and plays a role in fluid homeostasis by down-regulating cftr activity (PubMed:20933420).</text>
</comment>
<comment type="subunit">
    <text>Interacts with cftr (PubMed:20933420).</text>
</comment>
<comment type="subcellular location">
    <subcellularLocation>
        <location evidence="5">Cytoplasm</location>
    </subcellularLocation>
    <subcellularLocation>
        <location evidence="1">Nucleus</location>
    </subcellularLocation>
    <subcellularLocation>
        <location evidence="3">Apical cell membrane</location>
        <topology evidence="5">Peripheral membrane protein</topology>
    </subcellularLocation>
    <subcellularLocation>
        <location evidence="3">Basal cell membrane</location>
        <topology evidence="5">Peripheral membrane protein</topology>
    </subcellularLocation>
    <subcellularLocation>
        <location evidence="3">Lateral cell membrane</location>
        <topology evidence="5">Peripheral membrane protein</topology>
    </subcellularLocation>
    <text evidence="1">Shuttles between the nucleus and the cytoplasm.</text>
</comment>
<comment type="tissue specificity">
    <text evidence="3">Detected in larval gut, liver, exocrine pancreas and part of the brain and retina at 96 hpf.</text>
</comment>
<comment type="disruption phenotype">
    <text evidence="3">Morpholino knockdown of the protein causes strong expansion of the gut lumen, due to excessive fluid accumulation.</text>
</comment>
<comment type="similarity">
    <text evidence="4">Belongs to the XPO2/CSE1 family.</text>
</comment>
<gene>
    <name type="primary">cse1l</name>
    <name type="synonym">xpo2</name>
</gene>
<sequence>MELNDGNLQTLTEYLQKTLSADPAVRRPAEKFLESVEGNQNYPILLLAVLEKSQNEVIRVCSAVTFKNYIKRNWRIVEDEPNKISDPDRTAIKANIVNLMLTSPEQIQKQLSDAISIIGREDFPLKWPDLLTEMVNRFQSGDFHIINGVLRTAHSLFKRYRHEFKSNELWSEIKLVLDTFAQPLTELFKATIELCQTHATDINALKVLFSSLTLISKLFYSLNFQDLPEFFEDNMETWMTNFHNLLTLDNKLLQTDDEEEAGLLELLKSQICDNAALYAQKYDEEFQPYLPRFVTAIWNLLVTTGQEVKYDLLVSNAIQFLASVCERPHYKHLFEDQNVLTSICEKVIVPNMEFRSADEEAFEDNSEEYIIRDLEGSDIDTRRRAACDLVRGLCKFFEGPVTGIFSGYVNSMLAEYAKNPGVNWKHKDAAIYLVTSLASKAQTQKHGITQANELVNLSEFFLNHILIDLKSPNVNEFPVLKSDAIKYVMTFRSQLPKEQLLQAVPLLVSHLQAESIVQHTYAAHALERLFTMRGGNNTTLITPTEMAPFTEQLLNHLFKALAIPGSSENEYIMKAIMRSFSLLQEAIVPYIPTLIGQLTHKLLLVSKNPSKPHFNHYLFESLCLSIRITCKANPDTVSSFEEALFPVFTEILQNDVQEFVPYVFQVMSLLLEIHSNSIPSSYMALFPHLLQPVLWERTGNIPPLVRLLQAYLEKGAAAIANTASDKIPGLLGVFQKLIASKANDHQGFYLLNSIVEHMPAEAITQYRKQIFILLFQRLQSSKTTKFVKSFLVFINLYSVKYGAIALQEIFDDIQPKMFGMVVEKIVIPEVQKVSGQVEKKICAVGIIKILTECPAMMDTEYTKLWAPLLQALIGLFELPEDDSIPDDEHFIDIEDTPGYQTAFSQLAFAGKKEHDPIGDAVSNPKILLAQSLHKLSTACPGRVPSMLSTSLPTEALQFLQGYLQAATVQLV</sequence>
<dbReference type="EMBL" id="CR559931">
    <property type="status" value="NOT_ANNOTATED_CDS"/>
    <property type="molecule type" value="Genomic_DNA"/>
</dbReference>
<dbReference type="EMBL" id="BC052479">
    <property type="protein sequence ID" value="AAH52479.1"/>
    <property type="molecule type" value="mRNA"/>
</dbReference>
<dbReference type="EMBL" id="BC066737">
    <property type="protein sequence ID" value="AAH66737.1"/>
    <property type="molecule type" value="mRNA"/>
</dbReference>
<dbReference type="RefSeq" id="NP_958858.1">
    <property type="nucleotide sequence ID" value="NM_201450.1"/>
</dbReference>
<dbReference type="SMR" id="Q7SZC2"/>
<dbReference type="BioGRID" id="78862">
    <property type="interactions" value="1"/>
</dbReference>
<dbReference type="FunCoup" id="Q7SZC2">
    <property type="interactions" value="2909"/>
</dbReference>
<dbReference type="STRING" id="7955.ENSDARP00000022858"/>
<dbReference type="PaxDb" id="7955-ENSDARP00000022858"/>
<dbReference type="Ensembl" id="ENSDART00000013203">
    <property type="protein sequence ID" value="ENSDARP00000022858"/>
    <property type="gene ID" value="ENSDARG00000006963"/>
</dbReference>
<dbReference type="GeneID" id="30707"/>
<dbReference type="KEGG" id="dre:30707"/>
<dbReference type="AGR" id="ZFIN:ZDB-GENE-990603-1"/>
<dbReference type="CTD" id="1434"/>
<dbReference type="ZFIN" id="ZDB-GENE-990603-1">
    <property type="gene designation" value="cse1l"/>
</dbReference>
<dbReference type="eggNOG" id="KOG1992">
    <property type="taxonomic scope" value="Eukaryota"/>
</dbReference>
<dbReference type="InParanoid" id="Q7SZC2"/>
<dbReference type="OMA" id="AENEFLM"/>
<dbReference type="OrthoDB" id="3268246at2759"/>
<dbReference type="PhylomeDB" id="Q7SZC2"/>
<dbReference type="TreeFam" id="TF300473"/>
<dbReference type="PRO" id="PR:Q7SZC2"/>
<dbReference type="Proteomes" id="UP000000437">
    <property type="component" value="Chromosome 11"/>
</dbReference>
<dbReference type="Bgee" id="ENSDARG00000006963">
    <property type="expression patterns" value="Expressed in mature ovarian follicle and 32 other cell types or tissues"/>
</dbReference>
<dbReference type="GO" id="GO:0016324">
    <property type="term" value="C:apical plasma membrane"/>
    <property type="evidence" value="ECO:0007669"/>
    <property type="project" value="UniProtKB-SubCell"/>
</dbReference>
<dbReference type="GO" id="GO:0009925">
    <property type="term" value="C:basal plasma membrane"/>
    <property type="evidence" value="ECO:0007669"/>
    <property type="project" value="UniProtKB-SubCell"/>
</dbReference>
<dbReference type="GO" id="GO:0005829">
    <property type="term" value="C:cytosol"/>
    <property type="evidence" value="ECO:0000318"/>
    <property type="project" value="GO_Central"/>
</dbReference>
<dbReference type="GO" id="GO:0016328">
    <property type="term" value="C:lateral plasma membrane"/>
    <property type="evidence" value="ECO:0007669"/>
    <property type="project" value="UniProtKB-SubCell"/>
</dbReference>
<dbReference type="GO" id="GO:0005635">
    <property type="term" value="C:nuclear envelope"/>
    <property type="evidence" value="ECO:0000318"/>
    <property type="project" value="GO_Central"/>
</dbReference>
<dbReference type="GO" id="GO:0005049">
    <property type="term" value="F:nuclear export signal receptor activity"/>
    <property type="evidence" value="ECO:0000318"/>
    <property type="project" value="GO_Central"/>
</dbReference>
<dbReference type="GO" id="GO:0031267">
    <property type="term" value="F:small GTPase binding"/>
    <property type="evidence" value="ECO:0007669"/>
    <property type="project" value="InterPro"/>
</dbReference>
<dbReference type="GO" id="GO:0007589">
    <property type="term" value="P:body fluid secretion"/>
    <property type="evidence" value="ECO:0000315"/>
    <property type="project" value="ZFIN"/>
</dbReference>
<dbReference type="GO" id="GO:0006611">
    <property type="term" value="P:protein export from nucleus"/>
    <property type="evidence" value="ECO:0000318"/>
    <property type="project" value="GO_Central"/>
</dbReference>
<dbReference type="GO" id="GO:0006606">
    <property type="term" value="P:protein import into nucleus"/>
    <property type="evidence" value="ECO:0000318"/>
    <property type="project" value="GO_Central"/>
</dbReference>
<dbReference type="FunFam" id="1.25.10.10:FF:000057">
    <property type="entry name" value="Exportin-2 isoform 1"/>
    <property type="match status" value="1"/>
</dbReference>
<dbReference type="Gene3D" id="1.25.10.10">
    <property type="entry name" value="Leucine-rich Repeat Variant"/>
    <property type="match status" value="1"/>
</dbReference>
<dbReference type="InterPro" id="IPR011989">
    <property type="entry name" value="ARM-like"/>
</dbReference>
<dbReference type="InterPro" id="IPR016024">
    <property type="entry name" value="ARM-type_fold"/>
</dbReference>
<dbReference type="InterPro" id="IPR001494">
    <property type="entry name" value="Importin-beta_N"/>
</dbReference>
<dbReference type="InterPro" id="IPR005043">
    <property type="entry name" value="XPO2_C"/>
</dbReference>
<dbReference type="InterPro" id="IPR013713">
    <property type="entry name" value="XPO2_central"/>
</dbReference>
<dbReference type="PANTHER" id="PTHR10997:SF8">
    <property type="entry name" value="EXPORTIN-2"/>
    <property type="match status" value="1"/>
</dbReference>
<dbReference type="PANTHER" id="PTHR10997">
    <property type="entry name" value="IMPORTIN-7, 8, 11"/>
    <property type="match status" value="1"/>
</dbReference>
<dbReference type="Pfam" id="PF03378">
    <property type="entry name" value="CAS_CSE1"/>
    <property type="match status" value="1"/>
</dbReference>
<dbReference type="Pfam" id="PF08506">
    <property type="entry name" value="Cse1"/>
    <property type="match status" value="1"/>
</dbReference>
<dbReference type="Pfam" id="PF03810">
    <property type="entry name" value="IBN_N"/>
    <property type="match status" value="1"/>
</dbReference>
<dbReference type="SMART" id="SM00913">
    <property type="entry name" value="IBN_N"/>
    <property type="match status" value="1"/>
</dbReference>
<dbReference type="SUPFAM" id="SSF48371">
    <property type="entry name" value="ARM repeat"/>
    <property type="match status" value="1"/>
</dbReference>
<dbReference type="PROSITE" id="PS50166">
    <property type="entry name" value="IMPORTIN_B_NT"/>
    <property type="match status" value="1"/>
</dbReference>
<keyword id="KW-1003">Cell membrane</keyword>
<keyword id="KW-0963">Cytoplasm</keyword>
<keyword id="KW-0472">Membrane</keyword>
<keyword id="KW-0539">Nucleus</keyword>
<keyword id="KW-0653">Protein transport</keyword>
<keyword id="KW-1185">Reference proteome</keyword>
<keyword id="KW-0813">Transport</keyword>
<feature type="chain" id="PRO_0000237680" description="Exportin-2">
    <location>
        <begin position="1"/>
        <end position="971"/>
    </location>
</feature>
<feature type="domain" description="Importin N-terminal" evidence="2">
    <location>
        <begin position="29"/>
        <end position="102"/>
    </location>
</feature>
<feature type="sequence conflict" description="In Ref. 2; AAH52479/AAH66737." ref="2">
    <original>A</original>
    <variation>T</variation>
    <location>
        <position position="48"/>
    </location>
</feature>
<evidence type="ECO:0000250" key="1">
    <source>
        <dbReference type="UniProtKB" id="P55060"/>
    </source>
</evidence>
<evidence type="ECO:0000255" key="2">
    <source>
        <dbReference type="PROSITE-ProRule" id="PRU00115"/>
    </source>
</evidence>
<evidence type="ECO:0000269" key="3">
    <source>
    </source>
</evidence>
<evidence type="ECO:0000305" key="4"/>
<evidence type="ECO:0000305" key="5">
    <source>
    </source>
</evidence>
<evidence type="ECO:0000312" key="6">
    <source>
        <dbReference type="Proteomes" id="UP000000437"/>
    </source>
</evidence>